<proteinExistence type="inferred from homology"/>
<name>ISPE_CAMJR</name>
<evidence type="ECO:0000255" key="1">
    <source>
        <dbReference type="HAMAP-Rule" id="MF_00061"/>
    </source>
</evidence>
<feature type="chain" id="PRO_0000189200" description="4-diphosphocytidyl-2-C-methyl-D-erythritol kinase">
    <location>
        <begin position="1"/>
        <end position="255"/>
    </location>
</feature>
<feature type="active site" evidence="1">
    <location>
        <position position="6"/>
    </location>
</feature>
<feature type="active site" evidence="1">
    <location>
        <position position="137"/>
    </location>
</feature>
<feature type="binding site" evidence="1">
    <location>
        <begin position="95"/>
        <end position="105"/>
    </location>
    <ligand>
        <name>ATP</name>
        <dbReference type="ChEBI" id="CHEBI:30616"/>
    </ligand>
</feature>
<organism>
    <name type="scientific">Campylobacter jejuni (strain RM1221)</name>
    <dbReference type="NCBI Taxonomy" id="195099"/>
    <lineage>
        <taxon>Bacteria</taxon>
        <taxon>Pseudomonadati</taxon>
        <taxon>Campylobacterota</taxon>
        <taxon>Epsilonproteobacteria</taxon>
        <taxon>Campylobacterales</taxon>
        <taxon>Campylobacteraceae</taxon>
        <taxon>Campylobacter</taxon>
    </lineage>
</organism>
<dbReference type="EC" id="2.7.1.148" evidence="1"/>
<dbReference type="EMBL" id="CP000025">
    <property type="protein sequence ID" value="AAW35569.1"/>
    <property type="molecule type" value="Genomic_DNA"/>
</dbReference>
<dbReference type="RefSeq" id="WP_002859130.1">
    <property type="nucleotide sequence ID" value="NC_003912.7"/>
</dbReference>
<dbReference type="SMR" id="Q5HU00"/>
<dbReference type="KEGG" id="cjr:CJE1247"/>
<dbReference type="HOGENOM" id="CLU_053057_2_2_7"/>
<dbReference type="UniPathway" id="UPA00056">
    <property type="reaction ID" value="UER00094"/>
</dbReference>
<dbReference type="GO" id="GO:0050515">
    <property type="term" value="F:4-(cytidine 5'-diphospho)-2-C-methyl-D-erythritol kinase activity"/>
    <property type="evidence" value="ECO:0007669"/>
    <property type="project" value="UniProtKB-UniRule"/>
</dbReference>
<dbReference type="GO" id="GO:0005524">
    <property type="term" value="F:ATP binding"/>
    <property type="evidence" value="ECO:0007669"/>
    <property type="project" value="UniProtKB-UniRule"/>
</dbReference>
<dbReference type="GO" id="GO:0019288">
    <property type="term" value="P:isopentenyl diphosphate biosynthetic process, methylerythritol 4-phosphate pathway"/>
    <property type="evidence" value="ECO:0007669"/>
    <property type="project" value="UniProtKB-UniRule"/>
</dbReference>
<dbReference type="GO" id="GO:0016114">
    <property type="term" value="P:terpenoid biosynthetic process"/>
    <property type="evidence" value="ECO:0007669"/>
    <property type="project" value="InterPro"/>
</dbReference>
<dbReference type="Gene3D" id="3.30.230.10">
    <property type="match status" value="1"/>
</dbReference>
<dbReference type="Gene3D" id="3.30.70.890">
    <property type="entry name" value="GHMP kinase, C-terminal domain"/>
    <property type="match status" value="1"/>
</dbReference>
<dbReference type="HAMAP" id="MF_00061">
    <property type="entry name" value="IspE"/>
    <property type="match status" value="1"/>
</dbReference>
<dbReference type="InterPro" id="IPR036554">
    <property type="entry name" value="GHMP_kinase_C_sf"/>
</dbReference>
<dbReference type="InterPro" id="IPR006204">
    <property type="entry name" value="GHMP_kinase_N_dom"/>
</dbReference>
<dbReference type="InterPro" id="IPR004424">
    <property type="entry name" value="IspE"/>
</dbReference>
<dbReference type="InterPro" id="IPR020568">
    <property type="entry name" value="Ribosomal_Su5_D2-typ_SF"/>
</dbReference>
<dbReference type="InterPro" id="IPR014721">
    <property type="entry name" value="Ribsml_uS5_D2-typ_fold_subgr"/>
</dbReference>
<dbReference type="NCBIfam" id="TIGR00154">
    <property type="entry name" value="ispE"/>
    <property type="match status" value="1"/>
</dbReference>
<dbReference type="NCBIfam" id="NF003216">
    <property type="entry name" value="PRK04181.1"/>
    <property type="match status" value="1"/>
</dbReference>
<dbReference type="PANTHER" id="PTHR43527">
    <property type="entry name" value="4-DIPHOSPHOCYTIDYL-2-C-METHYL-D-ERYTHRITOL KINASE, CHLOROPLASTIC"/>
    <property type="match status" value="1"/>
</dbReference>
<dbReference type="PANTHER" id="PTHR43527:SF2">
    <property type="entry name" value="4-DIPHOSPHOCYTIDYL-2-C-METHYL-D-ERYTHRITOL KINASE, CHLOROPLASTIC"/>
    <property type="match status" value="1"/>
</dbReference>
<dbReference type="Pfam" id="PF00288">
    <property type="entry name" value="GHMP_kinases_N"/>
    <property type="match status" value="1"/>
</dbReference>
<dbReference type="PIRSF" id="PIRSF010376">
    <property type="entry name" value="IspE"/>
    <property type="match status" value="1"/>
</dbReference>
<dbReference type="SUPFAM" id="SSF55060">
    <property type="entry name" value="GHMP Kinase, C-terminal domain"/>
    <property type="match status" value="1"/>
</dbReference>
<dbReference type="SUPFAM" id="SSF54211">
    <property type="entry name" value="Ribosomal protein S5 domain 2-like"/>
    <property type="match status" value="1"/>
</dbReference>
<accession>Q5HU00</accession>
<reference key="1">
    <citation type="journal article" date="2005" name="PLoS Biol.">
        <title>Major structural differences and novel potential virulence mechanisms from the genomes of multiple Campylobacter species.</title>
        <authorList>
            <person name="Fouts D.E."/>
            <person name="Mongodin E.F."/>
            <person name="Mandrell R.E."/>
            <person name="Miller W.G."/>
            <person name="Rasko D.A."/>
            <person name="Ravel J."/>
            <person name="Brinkac L.M."/>
            <person name="DeBoy R.T."/>
            <person name="Parker C.T."/>
            <person name="Daugherty S.C."/>
            <person name="Dodson R.J."/>
            <person name="Durkin A.S."/>
            <person name="Madupu R."/>
            <person name="Sullivan S.A."/>
            <person name="Shetty J.U."/>
            <person name="Ayodeji M.A."/>
            <person name="Shvartsbeyn A."/>
            <person name="Schatz M.C."/>
            <person name="Badger J.H."/>
            <person name="Fraser C.M."/>
            <person name="Nelson K.E."/>
        </authorList>
    </citation>
    <scope>NUCLEOTIDE SEQUENCE [LARGE SCALE GENOMIC DNA]</scope>
    <source>
        <strain>RM1221</strain>
    </source>
</reference>
<keyword id="KW-0067">ATP-binding</keyword>
<keyword id="KW-0414">Isoprene biosynthesis</keyword>
<keyword id="KW-0418">Kinase</keyword>
<keyword id="KW-0547">Nucleotide-binding</keyword>
<keyword id="KW-0808">Transferase</keyword>
<gene>
    <name evidence="1" type="primary">ispE</name>
    <name type="ordered locus">CJE1247</name>
</gene>
<comment type="function">
    <text evidence="1">Catalyzes the phosphorylation of the position 2 hydroxy group of 4-diphosphocytidyl-2C-methyl-D-erythritol.</text>
</comment>
<comment type="catalytic activity">
    <reaction evidence="1">
        <text>4-CDP-2-C-methyl-D-erythritol + ATP = 4-CDP-2-C-methyl-D-erythritol 2-phosphate + ADP + H(+)</text>
        <dbReference type="Rhea" id="RHEA:18437"/>
        <dbReference type="ChEBI" id="CHEBI:15378"/>
        <dbReference type="ChEBI" id="CHEBI:30616"/>
        <dbReference type="ChEBI" id="CHEBI:57823"/>
        <dbReference type="ChEBI" id="CHEBI:57919"/>
        <dbReference type="ChEBI" id="CHEBI:456216"/>
        <dbReference type="EC" id="2.7.1.148"/>
    </reaction>
</comment>
<comment type="pathway">
    <text evidence="1">Isoprenoid biosynthesis; isopentenyl diphosphate biosynthesis via DXP pathway; isopentenyl diphosphate from 1-deoxy-D-xylulose 5-phosphate: step 3/6.</text>
</comment>
<comment type="similarity">
    <text evidence="1">Belongs to the GHMP kinase family. IspE subfamily.</text>
</comment>
<sequence length="255" mass="29268">MKAYAKANIFLKLTGFDSRKYHLLESRFILLKDVFDELELVDKESDSKKEFEIISNFKCENNIIQKAYLLLSRRYNNELKELFSKKSLKLTKNIPVCAGLGGGSSDCASFLLLINETLNLKLNLQELINLSIQLGSDIAFFLSGFHSANVSSCGEIIEEFEDDIPNLKWTFPQISCQTKAVYDEFDRGIFDFQKNNNQAQIYKKLSTKELLQNFKNKELNDLFTPCATLYPKMKSYLQEDFFLSGSGSSVFKVDR</sequence>
<protein>
    <recommendedName>
        <fullName evidence="1">4-diphosphocytidyl-2-C-methyl-D-erythritol kinase</fullName>
        <shortName evidence="1">CMK</shortName>
        <ecNumber evidence="1">2.7.1.148</ecNumber>
    </recommendedName>
    <alternativeName>
        <fullName evidence="1">4-(cytidine-5'-diphospho)-2-C-methyl-D-erythritol kinase</fullName>
    </alternativeName>
</protein>